<keyword id="KW-0044">Antibiotic</keyword>
<keyword id="KW-0929">Antimicrobial</keyword>
<keyword id="KW-0165">Cleavage on pair of basic residues</keyword>
<keyword id="KW-0211">Defensin</keyword>
<keyword id="KW-1015">Disulfide bond</keyword>
<keyword id="KW-0295">Fungicide</keyword>
<keyword id="KW-1185">Reference proteome</keyword>
<keyword id="KW-0964">Secreted</keyword>
<keyword id="KW-0732">Signal</keyword>
<feature type="signal peptide" evidence="2">
    <location>
        <begin position="1"/>
        <end position="23"/>
    </location>
</feature>
<feature type="propeptide" id="PRO_0000379967" evidence="1 2">
    <location>
        <begin position="24"/>
        <end position="33"/>
    </location>
</feature>
<feature type="chain" id="PRO_0000379968" description="Big defensin" evidence="1 2">
    <location>
        <begin position="36"/>
        <end position="117"/>
    </location>
</feature>
<feature type="disulfide bond" evidence="1">
    <location>
        <begin position="82"/>
        <end position="112"/>
    </location>
</feature>
<feature type="disulfide bond" evidence="1">
    <location>
        <begin position="89"/>
        <end position="107"/>
    </location>
</feature>
<feature type="disulfide bond" evidence="1">
    <location>
        <begin position="93"/>
        <end position="113"/>
    </location>
</feature>
<comment type="function">
    <text evidence="1">Significantly inhibits the growth of Gram-negative and Gram-positive bacteria and fungi in vitro.</text>
</comment>
<comment type="subcellular location">
    <subcellularLocation>
        <location evidence="1">Secreted</location>
    </subcellularLocation>
</comment>
<comment type="similarity">
    <text evidence="3">Belongs to the big defensin family.</text>
</comment>
<protein>
    <recommendedName>
        <fullName evidence="1">Big defensin</fullName>
    </recommendedName>
    <alternativeName>
        <fullName evidence="4">Defensin</fullName>
    </alternativeName>
</protein>
<proteinExistence type="inferred from homology"/>
<sequence>MEKKTAYCLLFLVLLVPYTALGAVLKRAPAKKEKRAVPLAVPLVYWGASVSPAVWNWLLVTFGAAAVAAAAVTVSDNDSHSCANNRGWCRSRCFSHEYIDSWHSDVCGSYDCCRPRY</sequence>
<accession>Q86QN6</accession>
<organism>
    <name type="scientific">Branchiostoma belcheri</name>
    <name type="common">Amphioxus</name>
    <dbReference type="NCBI Taxonomy" id="7741"/>
    <lineage>
        <taxon>Eukaryota</taxon>
        <taxon>Metazoa</taxon>
        <taxon>Chordata</taxon>
        <taxon>Cephalochordata</taxon>
        <taxon>Leptocardii</taxon>
        <taxon>Amphioxiformes</taxon>
        <taxon>Branchiostomatidae</taxon>
        <taxon>Branchiostoma</taxon>
    </lineage>
</organism>
<name>BDEF_BRABE</name>
<reference evidence="4" key="1">
    <citation type="submission" date="2002-11" db="EMBL/GenBank/DDBJ databases">
        <authorList>
            <person name="Zhang S."/>
            <person name="Liu Z."/>
            <person name="Liu M."/>
            <person name="Xu A."/>
        </authorList>
    </citation>
    <scope>NUCLEOTIDE SEQUENCE [MRNA]</scope>
    <source>
        <strain>Subsp. tsingtauense</strain>
    </source>
</reference>
<evidence type="ECO:0000250" key="1">
    <source>
        <dbReference type="UniProtKB" id="P80957"/>
    </source>
</evidence>
<evidence type="ECO:0000255" key="2"/>
<evidence type="ECO:0000305" key="3"/>
<evidence type="ECO:0000312" key="4">
    <source>
        <dbReference type="EMBL" id="AAO18674.1"/>
    </source>
</evidence>
<dbReference type="EMBL" id="AY175378">
    <property type="protein sequence ID" value="AAO18674.1"/>
    <property type="molecule type" value="mRNA"/>
</dbReference>
<dbReference type="SMR" id="Q86QN6"/>
<dbReference type="Proteomes" id="UP000515135">
    <property type="component" value="Unplaced"/>
</dbReference>
<dbReference type="GO" id="GO:0005576">
    <property type="term" value="C:extracellular region"/>
    <property type="evidence" value="ECO:0000250"/>
    <property type="project" value="UniProtKB"/>
</dbReference>
<dbReference type="GO" id="GO:0050832">
    <property type="term" value="P:defense response to fungus"/>
    <property type="evidence" value="ECO:0000250"/>
    <property type="project" value="UniProtKB"/>
</dbReference>
<dbReference type="GO" id="GO:0050829">
    <property type="term" value="P:defense response to Gram-negative bacterium"/>
    <property type="evidence" value="ECO:0000250"/>
    <property type="project" value="UniProtKB"/>
</dbReference>
<dbReference type="GO" id="GO:0050830">
    <property type="term" value="P:defense response to Gram-positive bacterium"/>
    <property type="evidence" value="ECO:0000250"/>
    <property type="project" value="UniProtKB"/>
</dbReference>
<dbReference type="GO" id="GO:0031640">
    <property type="term" value="P:killing of cells of another organism"/>
    <property type="evidence" value="ECO:0007669"/>
    <property type="project" value="UniProtKB-KW"/>
</dbReference>
<dbReference type="FunFam" id="2.20.20.10:FF:000002">
    <property type="entry name" value="Big defensin"/>
    <property type="match status" value="1"/>
</dbReference>
<dbReference type="Gene3D" id="2.20.20.10">
    <property type="entry name" value="Anthopleurin-A"/>
    <property type="match status" value="1"/>
</dbReference>
<dbReference type="Gene3D" id="3.40.1620.80">
    <property type="entry name" value="Big defensin, N-terminal domain"/>
    <property type="match status" value="1"/>
</dbReference>
<dbReference type="InterPro" id="IPR028060">
    <property type="entry name" value="Defensin_big_dom"/>
</dbReference>
<dbReference type="InterPro" id="IPR042033">
    <property type="entry name" value="Defensin_big_N"/>
</dbReference>
<dbReference type="InterPro" id="IPR023355">
    <property type="entry name" value="Myo_ane_neurotoxin_sf"/>
</dbReference>
<dbReference type="Pfam" id="PF14862">
    <property type="entry name" value="Defensin_big"/>
    <property type="match status" value="1"/>
</dbReference>